<evidence type="ECO:0000255" key="1"/>
<evidence type="ECO:0000269" key="2">
    <source>
    </source>
</evidence>
<evidence type="ECO:0000269" key="3">
    <source>
    </source>
</evidence>
<evidence type="ECO:0000303" key="4">
    <source>
    </source>
</evidence>
<evidence type="ECO:0000303" key="5">
    <source>
    </source>
</evidence>
<evidence type="ECO:0000303" key="6">
    <source>
    </source>
</evidence>
<evidence type="ECO:0000303" key="7">
    <source>
    </source>
</evidence>
<evidence type="ECO:0000303" key="8">
    <source>
    </source>
</evidence>
<evidence type="ECO:0000305" key="9"/>
<evidence type="ECO:0000305" key="10">
    <source>
    </source>
</evidence>
<evidence type="ECO:0000305" key="11">
    <source>
    </source>
</evidence>
<reference key="1">
    <citation type="journal article" date="2004" name="Peptides">
        <title>Identification and functional characterization of novel scorpion venom peptides with no disulfide bridge from Buthus martensii Karsch.</title>
        <authorList>
            <person name="Zeng X.-C."/>
            <person name="Wang S.-X."/>
            <person name="Zhu Y."/>
            <person name="Zhu S.-Y."/>
            <person name="Li W.-X."/>
        </authorList>
    </citation>
    <scope>NUCLEOTIDE SEQUENCE [MRNA]</scope>
    <scope>SYNTHESIS OF 24-36</scope>
    <scope>PROBABLE AMIDATION AT PHE-36</scope>
    <scope>FUNCTION</scope>
    <source>
        <tissue>Venom gland</tissue>
    </source>
</reference>
<reference key="2">
    <citation type="journal article" date="2012" name="PLoS ONE">
        <title>Anti-HIV-1 activity of a new scorpion venom peptide derivative Kn2-7.</title>
        <authorList>
            <person name="Chen Y."/>
            <person name="Cao L."/>
            <person name="Zhong M."/>
            <person name="Zhang Y."/>
            <person name="Han C."/>
            <person name="Li Q."/>
            <person name="Yang J."/>
            <person name="Zhou D."/>
            <person name="Shi W."/>
            <person name="He B."/>
            <person name="Liu F."/>
            <person name="Yu J."/>
            <person name="Sun Y."/>
            <person name="Cao Y."/>
            <person name="Li Y."/>
            <person name="Li W."/>
            <person name="Guo D."/>
            <person name="Cao Z."/>
            <person name="Yan H."/>
        </authorList>
    </citation>
    <scope>SYNTHESIS OF 24-36 (BMKN2 AND KN2-7)</scope>
    <scope>FUNCTION OF BMKN2</scope>
    <scope>FUNCTION OF MUTANT KN2-7</scope>
    <scope>MUTAGENESIS OF 26-GLY-ALA-27 AND SER-33</scope>
</reference>
<reference key="3">
    <citation type="journal article" date="2014" name="Peptides">
        <title>Potent and rapid antigonococcal activity of the venom peptide BmKn2 and its derivatives against different Maldi biotype of multidrug-resistant Neisseria gonorrhoeae.</title>
        <authorList>
            <person name="Arpornsuwan T."/>
            <person name="Buasakul B."/>
            <person name="Jaresitthikunchai J."/>
            <person name="Roytrakul S."/>
        </authorList>
    </citation>
    <scope>FUNCTION OF BMKN2</scope>
    <scope>MUTAGENESIS OF 31-LEU--PHE-36; 32-LEU--PHE-36; 33-SER--PHE-36; 34-LYS--PHE-36; 35-ILE--PHE-36 AND PHE-36</scope>
</reference>
<reference key="4">
    <citation type="journal article" date="2005" name="IUBMB Life">
        <title>Scorpion venom peptides without disulfide bridges.</title>
        <authorList>
            <person name="Zeng X.C."/>
            <person name="Corzo G."/>
            <person name="Hahin R."/>
        </authorList>
    </citation>
    <scope>NOMENCLATURE</scope>
</reference>
<reference key="5">
    <citation type="journal article" date="2014" name="Peptides">
        <title>Scorpion venom peptides with no disulfide bridges: a review.</title>
        <authorList>
            <person name="Almaaytah A."/>
            <person name="Albalas Q."/>
        </authorList>
    </citation>
    <scope>NOMENCLATURE</scope>
</reference>
<proteinExistence type="evidence at protein level"/>
<comment type="function">
    <text evidence="2 3">Antimicrobial peptide with potent activity against bacteria (PubMed:22536342, PubMed:24184420). Has strong antibacterial activity against Gram-positive bacteria S.aureus, M.luteus, B.subtilis, and Gram-negative bacteria E.coli, P.aeruginosa and N.gonorrhoeae. Also shows low activity against HIV-1 PV (PubMed:22536342).</text>
</comment>
<comment type="subcellular location">
    <subcellularLocation>
        <location evidence="10">Secreted</location>
    </subcellularLocation>
    <subcellularLocation>
        <location evidence="9">Target cell membrane</location>
    </subcellularLocation>
</comment>
<comment type="tissue specificity">
    <text evidence="10">Expressed by the venom gland.</text>
</comment>
<comment type="miscellaneous">
    <text evidence="2">The mutant Kn2-7 shows antiviral activities against HIV-1 (EC(50)=2.76 ug/ml). This activity is correlated with a direct interaction between the mutant and HIV-1 envelope.</text>
</comment>
<comment type="similarity">
    <text evidence="9">Belongs to the non-disulfide-bridged peptide (NDBP) superfamily. Short antimicrobial peptide (group 4) family.</text>
</comment>
<comment type="caution">
    <text evidence="11">Studies from PubMed:24184420 describe a peptide with an Arg-30 instead of an Asn-30.</text>
</comment>
<feature type="signal peptide" evidence="1">
    <location>
        <begin position="1"/>
        <end position="23"/>
    </location>
</feature>
<feature type="peptide" id="PRO_0000231500" description="Peptide BmKn2" evidence="10">
    <location>
        <begin position="24"/>
        <end position="36"/>
    </location>
</feature>
<feature type="propeptide" id="PRO_0000231501" evidence="10">
    <location>
        <begin position="40"/>
        <end position="70"/>
    </location>
</feature>
<feature type="modified residue" description="Phenylalanine amide" evidence="10">
    <location>
        <position position="36"/>
    </location>
</feature>
<feature type="mutagenesis site" description="Kn2-7: Shows a higher anti-HIV-1 activity; when associated with R-33." evidence="2">
    <original>GA</original>
    <variation>KR</variation>
    <location>
        <begin position="26"/>
        <end position="27"/>
    </location>
</feature>
<feature type="mutagenesis site" description="BmKn26: Important decrease in inhibition of N.gonorrhoeae." evidence="3">
    <location>
        <begin position="31"/>
        <end position="36"/>
    </location>
</feature>
<feature type="mutagenesis site" description="BmKn25: Important decrease in inhibition of N.gonorrhoeae." evidence="3">
    <location>
        <begin position="32"/>
        <end position="36"/>
    </location>
</feature>
<feature type="mutagenesis site" description="BmKn24: Important decrease in inhibition of N.gonorrhoeae." evidence="3">
    <location>
        <begin position="33"/>
        <end position="36"/>
    </location>
</feature>
<feature type="mutagenesis site" description="Kn2-7: Shows a higher anti-HIV-1 activity; when associated with 26-K-R-27." evidence="2">
    <original>S</original>
    <variation>R</variation>
    <location>
        <position position="33"/>
    </location>
</feature>
<feature type="mutagenesis site" description="BmKn23: Important decrease in inhibition of N.gonorrhoeae." evidence="3">
    <location>
        <begin position="34"/>
        <end position="36"/>
    </location>
</feature>
<feature type="mutagenesis site" description="BmKn22: Important decrease in inhibition of N.gonorrhoeae." evidence="3">
    <location>
        <begin position="35"/>
        <end position="36"/>
    </location>
</feature>
<feature type="mutagenesis site" description="BmKn21: Important decrease in inhibition of N.gonorrhoeae." evidence="3">
    <location>
        <position position="36"/>
    </location>
</feature>
<accession>Q6JQN2</accession>
<sequence>MKSQTFFLLFLVVLLLAISQSEAFIGAIANLLSKIFGKRSMRDMDTMKYLYDPSLSAADLKTLQKLMENY</sequence>
<name>NDB44_OLIMR</name>
<organism>
    <name type="scientific">Olivierus martensii</name>
    <name type="common">Manchurian scorpion</name>
    <name type="synonym">Mesobuthus martensii</name>
    <dbReference type="NCBI Taxonomy" id="34649"/>
    <lineage>
        <taxon>Eukaryota</taxon>
        <taxon>Metazoa</taxon>
        <taxon>Ecdysozoa</taxon>
        <taxon>Arthropoda</taxon>
        <taxon>Chelicerata</taxon>
        <taxon>Arachnida</taxon>
        <taxon>Scorpiones</taxon>
        <taxon>Buthida</taxon>
        <taxon>Buthoidea</taxon>
        <taxon>Buthidae</taxon>
        <taxon>Olivierus</taxon>
    </lineage>
</organism>
<keyword id="KW-0027">Amidation</keyword>
<keyword id="KW-0044">Antibiotic</keyword>
<keyword id="KW-0929">Antimicrobial</keyword>
<keyword id="KW-0930">Antiviral protein</keyword>
<keyword id="KW-0165">Cleavage on pair of basic residues</keyword>
<keyword id="KW-0472">Membrane</keyword>
<keyword id="KW-0964">Secreted</keyword>
<keyword id="KW-0732">Signal</keyword>
<keyword id="KW-1052">Target cell membrane</keyword>
<keyword id="KW-1053">Target membrane</keyword>
<keyword id="KW-0812">Transmembrane</keyword>
<dbReference type="EMBL" id="AY323830">
    <property type="protein sequence ID" value="AAQ89934.1"/>
    <property type="molecule type" value="mRNA"/>
</dbReference>
<dbReference type="SMR" id="Q6JQN2"/>
<dbReference type="GO" id="GO:0005576">
    <property type="term" value="C:extracellular region"/>
    <property type="evidence" value="ECO:0007669"/>
    <property type="project" value="UniProtKB-SubCell"/>
</dbReference>
<dbReference type="GO" id="GO:0016020">
    <property type="term" value="C:membrane"/>
    <property type="evidence" value="ECO:0007669"/>
    <property type="project" value="UniProtKB-KW"/>
</dbReference>
<dbReference type="GO" id="GO:0044218">
    <property type="term" value="C:other organism cell membrane"/>
    <property type="evidence" value="ECO:0007669"/>
    <property type="project" value="UniProtKB-KW"/>
</dbReference>
<dbReference type="GO" id="GO:0042742">
    <property type="term" value="P:defense response to bacterium"/>
    <property type="evidence" value="ECO:0007669"/>
    <property type="project" value="UniProtKB-KW"/>
</dbReference>
<dbReference type="GO" id="GO:0050688">
    <property type="term" value="P:regulation of defense response to virus"/>
    <property type="evidence" value="ECO:0007669"/>
    <property type="project" value="UniProtKB-KW"/>
</dbReference>
<protein>
    <recommendedName>
        <fullName evidence="4 6 7">Peptide BmKn2</fullName>
        <shortName>Kn2</shortName>
    </recommendedName>
    <alternativeName>
        <fullName evidence="8">Non-disulfide-bridged peptide 4.4</fullName>
        <shortName evidence="8">NDBP-4.4</shortName>
    </alternativeName>
    <alternativeName>
        <fullName evidence="5">Non-disulfide-bridged peptide 5.4</fullName>
        <shortName evidence="5">NDBP-5.4</shortName>
    </alternativeName>
</protein>